<sequence length="91" mass="9837">MDTYAIISFLLGIAFGFLRRGKEDRAKIIEVIFVSLLLGLVSGIALSHAVLDGAGWGEFVKAFGLIVAALIYAIFFAAGTYLGDLLEKLRK</sequence>
<dbReference type="EMBL" id="AE000782">
    <property type="protein sequence ID" value="AAB90354.1"/>
    <property type="molecule type" value="Genomic_DNA"/>
</dbReference>
<dbReference type="PIR" id="C69361">
    <property type="entry name" value="C69361"/>
</dbReference>
<dbReference type="RefSeq" id="WP_010878391.1">
    <property type="nucleotide sequence ID" value="NC_000917.1"/>
</dbReference>
<dbReference type="PaxDb" id="224325-AF_0891"/>
<dbReference type="EnsemblBacteria" id="AAB90354">
    <property type="protein sequence ID" value="AAB90354"/>
    <property type="gene ID" value="AF_0891"/>
</dbReference>
<dbReference type="GeneID" id="1484114"/>
<dbReference type="KEGG" id="afu:AF_0891"/>
<dbReference type="eggNOG" id="arCOG10388">
    <property type="taxonomic scope" value="Archaea"/>
</dbReference>
<dbReference type="HOGENOM" id="CLU_185768_0_0_2"/>
<dbReference type="Proteomes" id="UP000002199">
    <property type="component" value="Chromosome"/>
</dbReference>
<dbReference type="GO" id="GO:0005886">
    <property type="term" value="C:plasma membrane"/>
    <property type="evidence" value="ECO:0007669"/>
    <property type="project" value="UniProtKB-SubCell"/>
</dbReference>
<evidence type="ECO:0000255" key="1"/>
<evidence type="ECO:0000305" key="2"/>
<keyword id="KW-1003">Cell membrane</keyword>
<keyword id="KW-0472">Membrane</keyword>
<keyword id="KW-1185">Reference proteome</keyword>
<keyword id="KW-0812">Transmembrane</keyword>
<keyword id="KW-1133">Transmembrane helix</keyword>
<organism>
    <name type="scientific">Archaeoglobus fulgidus (strain ATCC 49558 / DSM 4304 / JCM 9628 / NBRC 100126 / VC-16)</name>
    <dbReference type="NCBI Taxonomy" id="224325"/>
    <lineage>
        <taxon>Archaea</taxon>
        <taxon>Methanobacteriati</taxon>
        <taxon>Methanobacteriota</taxon>
        <taxon>Archaeoglobi</taxon>
        <taxon>Archaeoglobales</taxon>
        <taxon>Archaeoglobaceae</taxon>
        <taxon>Archaeoglobus</taxon>
    </lineage>
</organism>
<comment type="subcellular location">
    <subcellularLocation>
        <location evidence="2">Cell membrane</location>
        <topology evidence="2">Multi-pass membrane protein</topology>
    </subcellularLocation>
</comment>
<reference key="1">
    <citation type="journal article" date="1997" name="Nature">
        <title>The complete genome sequence of the hyperthermophilic, sulphate-reducing archaeon Archaeoglobus fulgidus.</title>
        <authorList>
            <person name="Klenk H.-P."/>
            <person name="Clayton R.A."/>
            <person name="Tomb J.-F."/>
            <person name="White O."/>
            <person name="Nelson K.E."/>
            <person name="Ketchum K.A."/>
            <person name="Dodson R.J."/>
            <person name="Gwinn M.L."/>
            <person name="Hickey E.K."/>
            <person name="Peterson J.D."/>
            <person name="Richardson D.L."/>
            <person name="Kerlavage A.R."/>
            <person name="Graham D.E."/>
            <person name="Kyrpides N.C."/>
            <person name="Fleischmann R.D."/>
            <person name="Quackenbush J."/>
            <person name="Lee N.H."/>
            <person name="Sutton G.G."/>
            <person name="Gill S.R."/>
            <person name="Kirkness E.F."/>
            <person name="Dougherty B.A."/>
            <person name="McKenney K."/>
            <person name="Adams M.D."/>
            <person name="Loftus B.J."/>
            <person name="Peterson S.N."/>
            <person name="Reich C.I."/>
            <person name="McNeil L.K."/>
            <person name="Badger J.H."/>
            <person name="Glodek A."/>
            <person name="Zhou L."/>
            <person name="Overbeek R."/>
            <person name="Gocayne J.D."/>
            <person name="Weidman J.F."/>
            <person name="McDonald L.A."/>
            <person name="Utterback T.R."/>
            <person name="Cotton M.D."/>
            <person name="Spriggs T."/>
            <person name="Artiach P."/>
            <person name="Kaine B.P."/>
            <person name="Sykes S.M."/>
            <person name="Sadow P.W."/>
            <person name="D'Andrea K.P."/>
            <person name="Bowman C."/>
            <person name="Fujii C."/>
            <person name="Garland S.A."/>
            <person name="Mason T.M."/>
            <person name="Olsen G.J."/>
            <person name="Fraser C.M."/>
            <person name="Smith H.O."/>
            <person name="Woese C.R."/>
            <person name="Venter J.C."/>
        </authorList>
    </citation>
    <scope>NUCLEOTIDE SEQUENCE [LARGE SCALE GENOMIC DNA]</scope>
    <source>
        <strain>ATCC 49558 / DSM 4304 / JCM 9628 / NBRC 100126 / VC-16</strain>
    </source>
</reference>
<gene>
    <name type="ordered locus">AF_0891</name>
</gene>
<accession>O29371</accession>
<name>Y891_ARCFU</name>
<proteinExistence type="predicted"/>
<protein>
    <recommendedName>
        <fullName>Uncharacterized protein AF_0891</fullName>
    </recommendedName>
</protein>
<feature type="chain" id="PRO_0000127941" description="Uncharacterized protein AF_0891">
    <location>
        <begin position="1"/>
        <end position="91"/>
    </location>
</feature>
<feature type="transmembrane region" description="Helical" evidence="1">
    <location>
        <begin position="4"/>
        <end position="21"/>
    </location>
</feature>
<feature type="transmembrane region" description="Helical" evidence="1">
    <location>
        <begin position="28"/>
        <end position="50"/>
    </location>
</feature>
<feature type="transmembrane region" description="Helical" evidence="1">
    <location>
        <begin position="60"/>
        <end position="82"/>
    </location>
</feature>